<reference key="1">
    <citation type="journal article" date="2002" name="Nature">
        <title>The genome sequence of Schizosaccharomyces pombe.</title>
        <authorList>
            <person name="Wood V."/>
            <person name="Gwilliam R."/>
            <person name="Rajandream M.A."/>
            <person name="Lyne M.H."/>
            <person name="Lyne R."/>
            <person name="Stewart A."/>
            <person name="Sgouros J.G."/>
            <person name="Peat N."/>
            <person name="Hayles J."/>
            <person name="Baker S.G."/>
            <person name="Basham D."/>
            <person name="Bowman S."/>
            <person name="Brooks K."/>
            <person name="Brown D."/>
            <person name="Brown S."/>
            <person name="Chillingworth T."/>
            <person name="Churcher C.M."/>
            <person name="Collins M."/>
            <person name="Connor R."/>
            <person name="Cronin A."/>
            <person name="Davis P."/>
            <person name="Feltwell T."/>
            <person name="Fraser A."/>
            <person name="Gentles S."/>
            <person name="Goble A."/>
            <person name="Hamlin N."/>
            <person name="Harris D.E."/>
            <person name="Hidalgo J."/>
            <person name="Hodgson G."/>
            <person name="Holroyd S."/>
            <person name="Hornsby T."/>
            <person name="Howarth S."/>
            <person name="Huckle E.J."/>
            <person name="Hunt S."/>
            <person name="Jagels K."/>
            <person name="James K.D."/>
            <person name="Jones L."/>
            <person name="Jones M."/>
            <person name="Leather S."/>
            <person name="McDonald S."/>
            <person name="McLean J."/>
            <person name="Mooney P."/>
            <person name="Moule S."/>
            <person name="Mungall K.L."/>
            <person name="Murphy L.D."/>
            <person name="Niblett D."/>
            <person name="Odell C."/>
            <person name="Oliver K."/>
            <person name="O'Neil S."/>
            <person name="Pearson D."/>
            <person name="Quail M.A."/>
            <person name="Rabbinowitsch E."/>
            <person name="Rutherford K.M."/>
            <person name="Rutter S."/>
            <person name="Saunders D."/>
            <person name="Seeger K."/>
            <person name="Sharp S."/>
            <person name="Skelton J."/>
            <person name="Simmonds M.N."/>
            <person name="Squares R."/>
            <person name="Squares S."/>
            <person name="Stevens K."/>
            <person name="Taylor K."/>
            <person name="Taylor R.G."/>
            <person name="Tivey A."/>
            <person name="Walsh S.V."/>
            <person name="Warren T."/>
            <person name="Whitehead S."/>
            <person name="Woodward J.R."/>
            <person name="Volckaert G."/>
            <person name="Aert R."/>
            <person name="Robben J."/>
            <person name="Grymonprez B."/>
            <person name="Weltjens I."/>
            <person name="Vanstreels E."/>
            <person name="Rieger M."/>
            <person name="Schaefer M."/>
            <person name="Mueller-Auer S."/>
            <person name="Gabel C."/>
            <person name="Fuchs M."/>
            <person name="Duesterhoeft A."/>
            <person name="Fritzc C."/>
            <person name="Holzer E."/>
            <person name="Moestl D."/>
            <person name="Hilbert H."/>
            <person name="Borzym K."/>
            <person name="Langer I."/>
            <person name="Beck A."/>
            <person name="Lehrach H."/>
            <person name="Reinhardt R."/>
            <person name="Pohl T.M."/>
            <person name="Eger P."/>
            <person name="Zimmermann W."/>
            <person name="Wedler H."/>
            <person name="Wambutt R."/>
            <person name="Purnelle B."/>
            <person name="Goffeau A."/>
            <person name="Cadieu E."/>
            <person name="Dreano S."/>
            <person name="Gloux S."/>
            <person name="Lelaure V."/>
            <person name="Mottier S."/>
            <person name="Galibert F."/>
            <person name="Aves S.J."/>
            <person name="Xiang Z."/>
            <person name="Hunt C."/>
            <person name="Moore K."/>
            <person name="Hurst S.M."/>
            <person name="Lucas M."/>
            <person name="Rochet M."/>
            <person name="Gaillardin C."/>
            <person name="Tallada V.A."/>
            <person name="Garzon A."/>
            <person name="Thode G."/>
            <person name="Daga R.R."/>
            <person name="Cruzado L."/>
            <person name="Jimenez J."/>
            <person name="Sanchez M."/>
            <person name="del Rey F."/>
            <person name="Benito J."/>
            <person name="Dominguez A."/>
            <person name="Revuelta J.L."/>
            <person name="Moreno S."/>
            <person name="Armstrong J."/>
            <person name="Forsburg S.L."/>
            <person name="Cerutti L."/>
            <person name="Lowe T."/>
            <person name="McCombie W.R."/>
            <person name="Paulsen I."/>
            <person name="Potashkin J."/>
            <person name="Shpakovski G.V."/>
            <person name="Ussery D."/>
            <person name="Barrell B.G."/>
            <person name="Nurse P."/>
        </authorList>
    </citation>
    <scope>NUCLEOTIDE SEQUENCE [LARGE SCALE GENOMIC DNA]</scope>
    <source>
        <strain>972 / ATCC 24843</strain>
    </source>
</reference>
<evidence type="ECO:0000250" key="1"/>
<evidence type="ECO:0000305" key="2"/>
<accession>Q9UTM4</accession>
<gene>
    <name type="primary">cct5</name>
    <name type="ORF">SPAC1420.02c</name>
</gene>
<feature type="chain" id="PRO_0000128353" description="T-complex protein 1 subunit epsilon">
    <location>
        <begin position="1"/>
        <end position="546"/>
    </location>
</feature>
<dbReference type="EMBL" id="CU329670">
    <property type="protein sequence ID" value="CAB57321.1"/>
    <property type="molecule type" value="Genomic_DNA"/>
</dbReference>
<dbReference type="PIR" id="T37665">
    <property type="entry name" value="T37665"/>
</dbReference>
<dbReference type="RefSeq" id="NP_593277.1">
    <property type="nucleotide sequence ID" value="NM_001018673.2"/>
</dbReference>
<dbReference type="SMR" id="Q9UTM4"/>
<dbReference type="BioGRID" id="279313">
    <property type="interactions" value="8"/>
</dbReference>
<dbReference type="FunCoup" id="Q9UTM4">
    <property type="interactions" value="814"/>
</dbReference>
<dbReference type="STRING" id="284812.Q9UTM4"/>
<dbReference type="iPTMnet" id="Q9UTM4"/>
<dbReference type="PaxDb" id="4896-SPAC1420.02c.1"/>
<dbReference type="EnsemblFungi" id="SPAC1420.02c.1">
    <property type="protein sequence ID" value="SPAC1420.02c.1:pep"/>
    <property type="gene ID" value="SPAC1420.02c"/>
</dbReference>
<dbReference type="GeneID" id="2542868"/>
<dbReference type="KEGG" id="spo:2542868"/>
<dbReference type="PomBase" id="SPAC1420.02c">
    <property type="gene designation" value="cct5"/>
</dbReference>
<dbReference type="VEuPathDB" id="FungiDB:SPAC1420.02c"/>
<dbReference type="eggNOG" id="KOG0357">
    <property type="taxonomic scope" value="Eukaryota"/>
</dbReference>
<dbReference type="HOGENOM" id="CLU_008891_7_2_1"/>
<dbReference type="InParanoid" id="Q9UTM4"/>
<dbReference type="OMA" id="SHPQMPH"/>
<dbReference type="PhylomeDB" id="Q9UTM4"/>
<dbReference type="Reactome" id="R-SPO-390471">
    <property type="pathway name" value="Association of TriC/CCT with target proteins during biosynthesis"/>
</dbReference>
<dbReference type="Reactome" id="R-SPO-6814122">
    <property type="pathway name" value="Cooperation of PDCL (PhLP1) and TRiC/CCT in G-protein beta folding"/>
</dbReference>
<dbReference type="PRO" id="PR:Q9UTM4"/>
<dbReference type="Proteomes" id="UP000002485">
    <property type="component" value="Chromosome I"/>
</dbReference>
<dbReference type="GO" id="GO:0005832">
    <property type="term" value="C:chaperonin-containing T-complex"/>
    <property type="evidence" value="ECO:0000314"/>
    <property type="project" value="PomBase"/>
</dbReference>
<dbReference type="GO" id="GO:0005737">
    <property type="term" value="C:cytoplasm"/>
    <property type="evidence" value="ECO:0007005"/>
    <property type="project" value="PomBase"/>
</dbReference>
<dbReference type="GO" id="GO:0005856">
    <property type="term" value="C:cytoskeleton"/>
    <property type="evidence" value="ECO:0000266"/>
    <property type="project" value="PomBase"/>
</dbReference>
<dbReference type="GO" id="GO:0005524">
    <property type="term" value="F:ATP binding"/>
    <property type="evidence" value="ECO:0007669"/>
    <property type="project" value="UniProtKB-KW"/>
</dbReference>
<dbReference type="GO" id="GO:0016887">
    <property type="term" value="F:ATP hydrolysis activity"/>
    <property type="evidence" value="ECO:0007669"/>
    <property type="project" value="InterPro"/>
</dbReference>
<dbReference type="GO" id="GO:0140662">
    <property type="term" value="F:ATP-dependent protein folding chaperone"/>
    <property type="evidence" value="ECO:0007669"/>
    <property type="project" value="InterPro"/>
</dbReference>
<dbReference type="GO" id="GO:0051082">
    <property type="term" value="F:unfolded protein binding"/>
    <property type="evidence" value="ECO:0000318"/>
    <property type="project" value="GO_Central"/>
</dbReference>
<dbReference type="GO" id="GO:0006457">
    <property type="term" value="P:protein folding"/>
    <property type="evidence" value="ECO:0000318"/>
    <property type="project" value="GO_Central"/>
</dbReference>
<dbReference type="CDD" id="cd03339">
    <property type="entry name" value="TCP1_epsilon"/>
    <property type="match status" value="1"/>
</dbReference>
<dbReference type="FunFam" id="1.10.560.10:FF:000053">
    <property type="entry name" value="T-complex protein 1 subunit delta"/>
    <property type="match status" value="1"/>
</dbReference>
<dbReference type="FunFam" id="3.50.7.10:FF:000003">
    <property type="entry name" value="T-complex protein 1 subunit epsilon"/>
    <property type="match status" value="1"/>
</dbReference>
<dbReference type="Gene3D" id="3.50.7.10">
    <property type="entry name" value="GroEL"/>
    <property type="match status" value="1"/>
</dbReference>
<dbReference type="Gene3D" id="1.10.560.10">
    <property type="entry name" value="GroEL-like equatorial domain"/>
    <property type="match status" value="1"/>
</dbReference>
<dbReference type="Gene3D" id="3.30.260.10">
    <property type="entry name" value="TCP-1-like chaperonin intermediate domain"/>
    <property type="match status" value="1"/>
</dbReference>
<dbReference type="InterPro" id="IPR012718">
    <property type="entry name" value="Chap_CCT_epsi"/>
</dbReference>
<dbReference type="InterPro" id="IPR017998">
    <property type="entry name" value="Chaperone_TCP-1"/>
</dbReference>
<dbReference type="InterPro" id="IPR002194">
    <property type="entry name" value="Chaperonin_TCP-1_CS"/>
</dbReference>
<dbReference type="InterPro" id="IPR002423">
    <property type="entry name" value="Cpn60/GroEL/TCP-1"/>
</dbReference>
<dbReference type="InterPro" id="IPR027409">
    <property type="entry name" value="GroEL-like_apical_dom_sf"/>
</dbReference>
<dbReference type="InterPro" id="IPR027413">
    <property type="entry name" value="GROEL-like_equatorial_sf"/>
</dbReference>
<dbReference type="InterPro" id="IPR027410">
    <property type="entry name" value="TCP-1-like_intermed_sf"/>
</dbReference>
<dbReference type="InterPro" id="IPR053374">
    <property type="entry name" value="TCP-1_chaperonin"/>
</dbReference>
<dbReference type="InterPro" id="IPR054827">
    <property type="entry name" value="thermosome_alpha"/>
</dbReference>
<dbReference type="NCBIfam" id="TIGR02343">
    <property type="entry name" value="chap_CCT_epsi"/>
    <property type="match status" value="1"/>
</dbReference>
<dbReference type="NCBIfam" id="NF041082">
    <property type="entry name" value="thermosome_alpha"/>
    <property type="match status" value="1"/>
</dbReference>
<dbReference type="NCBIfam" id="NF041083">
    <property type="entry name" value="thermosome_beta"/>
    <property type="match status" value="1"/>
</dbReference>
<dbReference type="PANTHER" id="PTHR11353">
    <property type="entry name" value="CHAPERONIN"/>
    <property type="match status" value="1"/>
</dbReference>
<dbReference type="Pfam" id="PF00118">
    <property type="entry name" value="Cpn60_TCP1"/>
    <property type="match status" value="1"/>
</dbReference>
<dbReference type="PRINTS" id="PR00304">
    <property type="entry name" value="TCOMPLEXTCP1"/>
</dbReference>
<dbReference type="SUPFAM" id="SSF52029">
    <property type="entry name" value="GroEL apical domain-like"/>
    <property type="match status" value="1"/>
</dbReference>
<dbReference type="SUPFAM" id="SSF48592">
    <property type="entry name" value="GroEL equatorial domain-like"/>
    <property type="match status" value="1"/>
</dbReference>
<dbReference type="SUPFAM" id="SSF54849">
    <property type="entry name" value="GroEL-intermediate domain like"/>
    <property type="match status" value="1"/>
</dbReference>
<dbReference type="PROSITE" id="PS00750">
    <property type="entry name" value="TCP1_1"/>
    <property type="match status" value="1"/>
</dbReference>
<dbReference type="PROSITE" id="PS00751">
    <property type="entry name" value="TCP1_2"/>
    <property type="match status" value="1"/>
</dbReference>
<dbReference type="PROSITE" id="PS00995">
    <property type="entry name" value="TCP1_3"/>
    <property type="match status" value="1"/>
</dbReference>
<proteinExistence type="inferred from homology"/>
<sequence>MAGLDNAVMVRDDQGNPFILVRDQEKKRRLHGIDAVKSHILATKTVANIVRTSLGPRGLDKILISPDGEITVTNDGATILDQMEVEHQIAKLLVQLSKSQDDEIGDGTTGVVVLAGALLEQAEALIDKGIHPIRIADGYEKACQVAVKHLDAISDVVDFSPENTTNLFRSAKTSLGSKVVSKAHDHFANIAVDAVLSVADLQRKDVDFELIKVDGKVGGSVDDTKLVKGVVVDKDMSHPQMPHRIENAKIAILTCPFEPPKPKTKHKLDITSVSEFEALQAYEKEKFQEMIKHVKDAGANLVICQWGFDDEANHLLLQNNLPAVRWVGGPEIELIAIATNGRIVPRFEDLSSDKLGSAGIVREVSFGTTRDKILVIEKCANSRAVTVFVRGSNKMIVDEAKRALHDALCVVRNLIRDNRVVYGGGAAEISCSLAVTKEAEKIPGIDQYSMGAFADALDTIPLALAENSGLSSIEALTAVKARHVKENKAYLGIDCLQTGSNDMRKQFVIDPLIGKKQQLLLATQLCRMVLKVNDIIVAGSKDDDYN</sequence>
<name>TCPE_SCHPO</name>
<comment type="function">
    <text evidence="1">Molecular chaperone; assists the folding of proteins upon ATP hydrolysis. Known to play a role, in vitro, in the folding of actin and tubulin (By similarity).</text>
</comment>
<comment type="subunit">
    <text evidence="2">Heterooligomeric complex of about 850 to 900 kDa that forms two stacked rings, 12 to 16 nm in diameter.</text>
</comment>
<comment type="subcellular location">
    <subcellularLocation>
        <location evidence="2">Cytoplasm</location>
    </subcellularLocation>
</comment>
<comment type="similarity">
    <text evidence="2">Belongs to the TCP-1 chaperonin family.</text>
</comment>
<keyword id="KW-0067">ATP-binding</keyword>
<keyword id="KW-0143">Chaperone</keyword>
<keyword id="KW-0963">Cytoplasm</keyword>
<keyword id="KW-0547">Nucleotide-binding</keyword>
<keyword id="KW-1185">Reference proteome</keyword>
<organism>
    <name type="scientific">Schizosaccharomyces pombe (strain 972 / ATCC 24843)</name>
    <name type="common">Fission yeast</name>
    <dbReference type="NCBI Taxonomy" id="284812"/>
    <lineage>
        <taxon>Eukaryota</taxon>
        <taxon>Fungi</taxon>
        <taxon>Dikarya</taxon>
        <taxon>Ascomycota</taxon>
        <taxon>Taphrinomycotina</taxon>
        <taxon>Schizosaccharomycetes</taxon>
        <taxon>Schizosaccharomycetales</taxon>
        <taxon>Schizosaccharomycetaceae</taxon>
        <taxon>Schizosaccharomyces</taxon>
    </lineage>
</organism>
<protein>
    <recommendedName>
        <fullName>T-complex protein 1 subunit epsilon</fullName>
        <shortName>TCP-1-epsilon</shortName>
    </recommendedName>
    <alternativeName>
        <fullName>CCT-epsilon</fullName>
    </alternativeName>
</protein>